<name>SEC31_EREGS</name>
<reference key="1">
    <citation type="journal article" date="2004" name="Science">
        <title>The Ashbya gossypii genome as a tool for mapping the ancient Saccharomyces cerevisiae genome.</title>
        <authorList>
            <person name="Dietrich F.S."/>
            <person name="Voegeli S."/>
            <person name="Brachat S."/>
            <person name="Lerch A."/>
            <person name="Gates K."/>
            <person name="Steiner S."/>
            <person name="Mohr C."/>
            <person name="Poehlmann R."/>
            <person name="Luedi P."/>
            <person name="Choi S."/>
            <person name="Wing R.A."/>
            <person name="Flavier A."/>
            <person name="Gaffney T.D."/>
            <person name="Philippsen P."/>
        </authorList>
    </citation>
    <scope>NUCLEOTIDE SEQUENCE [LARGE SCALE GENOMIC DNA]</scope>
    <source>
        <strain>ATCC 10895 / CBS 109.51 / FGSC 9923 / NRRL Y-1056</strain>
    </source>
</reference>
<reference key="2">
    <citation type="journal article" date="2013" name="G3 (Bethesda)">
        <title>Genomes of Ashbya fungi isolated from insects reveal four mating-type loci, numerous translocations, lack of transposons, and distinct gene duplications.</title>
        <authorList>
            <person name="Dietrich F.S."/>
            <person name="Voegeli S."/>
            <person name="Kuo S."/>
            <person name="Philippsen P."/>
        </authorList>
    </citation>
    <scope>GENOME REANNOTATION</scope>
    <scope>SEQUENCE REVISION TO 591; 600; 608; 617 AND 624-640</scope>
    <source>
        <strain>ATCC 10895 / CBS 109.51 / FGSC 9923 / NRRL Y-1056</strain>
    </source>
</reference>
<proteinExistence type="inferred from homology"/>
<keyword id="KW-0968">Cytoplasmic vesicle</keyword>
<keyword id="KW-0256">Endoplasmic reticulum</keyword>
<keyword id="KW-0931">ER-Golgi transport</keyword>
<keyword id="KW-0472">Membrane</keyword>
<keyword id="KW-0653">Protein transport</keyword>
<keyword id="KW-1185">Reference proteome</keyword>
<keyword id="KW-0677">Repeat</keyword>
<keyword id="KW-0813">Transport</keyword>
<keyword id="KW-0853">WD repeat</keyword>
<feature type="chain" id="PRO_0000295427" description="Protein transport protein SEC31">
    <location>
        <begin position="1"/>
        <end position="1234"/>
    </location>
</feature>
<feature type="repeat" description="WD 1">
    <location>
        <begin position="5"/>
        <end position="46"/>
    </location>
</feature>
<feature type="repeat" description="WD 2">
    <location>
        <begin position="59"/>
        <end position="98"/>
    </location>
</feature>
<feature type="repeat" description="WD 3">
    <location>
        <begin position="101"/>
        <end position="141"/>
    </location>
</feature>
<feature type="repeat" description="WD 4">
    <location>
        <begin position="151"/>
        <end position="191"/>
    </location>
</feature>
<feature type="repeat" description="WD 5">
    <location>
        <begin position="200"/>
        <end position="243"/>
    </location>
</feature>
<feature type="repeat" description="WD 6">
    <location>
        <begin position="248"/>
        <end position="288"/>
    </location>
</feature>
<feature type="repeat" description="WD 7">
    <location>
        <begin position="291"/>
        <end position="331"/>
    </location>
</feature>
<feature type="repeat" description="WD 8; interaction with SEC13" evidence="2">
    <location>
        <begin position="378"/>
        <end position="398"/>
    </location>
</feature>
<feature type="region of interest" description="Disordered" evidence="3">
    <location>
        <begin position="822"/>
        <end position="870"/>
    </location>
</feature>
<feature type="region of interest" description="Disordered" evidence="3">
    <location>
        <begin position="1053"/>
        <end position="1115"/>
    </location>
</feature>
<feature type="compositionally biased region" description="Polar residues" evidence="3">
    <location>
        <begin position="824"/>
        <end position="837"/>
    </location>
</feature>
<feature type="compositionally biased region" description="Polar residues" evidence="3">
    <location>
        <begin position="847"/>
        <end position="862"/>
    </location>
</feature>
<feature type="compositionally biased region" description="Polar residues" evidence="3">
    <location>
        <begin position="1086"/>
        <end position="1096"/>
    </location>
</feature>
<protein>
    <recommendedName>
        <fullName>Protein transport protein SEC31</fullName>
    </recommendedName>
</protein>
<sequence>MVKLAEYPRTATFAWSPDKVPVLATGTASGTVDADFSSTATLEFWEVGSAESGPQGSVTADAKFNDLDWSRDGAMLAGALENGVVEFFCARERRSVARVARHTTGVRAVRFNAKQANVAVSGGSQGEIFVWDTNKISAAGYSPFGPGTAMTPIDEVQSLAWNQSLAHVFASAGSSGFASIWDLKAKKEVIHLSYTSPHSGLKNQLAVVEWHPSNSTRVATATGNDNEPVILVWDLRNANMPLQVMSQGHSKGILSLDWCKHDEKLMLSSGRDNTCILWNPEEAQKLTQYPTRGNWCFKTKFAPEAPDLFASASFDNKIQVQTLQNLANKLDLDETAFKQQESEADFWNNVSQSESKEKPVVTKIQAPAWHSKKSPAAHWAFGGKIVRITSDGLGVSVSKPHIEGFEKNVMLDEALQSKNFVPIINKRLAQTVTPTNEEDWSLLESLSMDGKDTYLQEALSFDDNEAVDSQPDTKDEDFFLNLTGQYEPSGEFELDAANPGITLNLLKGELSKAVNLALEKDLLLESLVIALNSDDDQIKQKVKNAYYTKYASNSQLARSLYAISERKIEDLVDNLNVSQWKHIVMAIKTYATEQSKNSLLIRLGDRLLQAGQRQNAVTLYLAGQSLDKVASVWLRELPALESEMRSHKNTLNEAHLEALTEFVERFTVLSAYINEDGGAKLTNEELVSKFLEFVSMASSSGDFELALKFLENLPGDNEQVKTEKQRVLIASGKCATTSATSTRRGKYGSTTVAPGVPGMPAAPMPVVGMQPPANPLADRTASYGAPGYNVAAPMPPPNGRPNPYAAPAPAYQMANPAAHGKYVNSASASPGHNTPRGSVSMPHNPYAPSTNGAGAVSHNSYAPQHVQPAGQPQNMYGVPPQRNFMNQTQDKPPVNPAATNVLSGQSPHLNRKANNGWNDLPEIVKEKKSRAKPVSTAPVAVASMTGMQASPNVTGGTIPPPPITRVTSNTSIAGSPMTPQKLSRKSSVVQTTALNAPVPVNPYAPPVTGRNAVQSPPLNPYAPSGAHAAAPPTGTYSPHLAGQAIDHTHRATPLSNMAAPPQKAMPGPPPKSMARKSTTSEKDIDSANQLLSSIQKAPNGGPPPRKQVVAPQPSVHAASPVAEPVAIPPQQQLIIEFFKEELARVTPLVPPEYNKQLKDCSKRLNILFTHIEKQDLLSAPTIEKLHTIVALLREHKYSDALAVHVDIATNHVQEAGNWLTGVKRLIGLAEATSS</sequence>
<accession>Q75A30</accession>
<organism>
    <name type="scientific">Eremothecium gossypii (strain ATCC 10895 / CBS 109.51 / FGSC 9923 / NRRL Y-1056)</name>
    <name type="common">Yeast</name>
    <name type="synonym">Ashbya gossypii</name>
    <dbReference type="NCBI Taxonomy" id="284811"/>
    <lineage>
        <taxon>Eukaryota</taxon>
        <taxon>Fungi</taxon>
        <taxon>Dikarya</taxon>
        <taxon>Ascomycota</taxon>
        <taxon>Saccharomycotina</taxon>
        <taxon>Saccharomycetes</taxon>
        <taxon>Saccharomycetales</taxon>
        <taxon>Saccharomycetaceae</taxon>
        <taxon>Eremothecium</taxon>
    </lineage>
</organism>
<dbReference type="EMBL" id="AE016817">
    <property type="protein sequence ID" value="AAS52010.2"/>
    <property type="molecule type" value="Genomic_DNA"/>
</dbReference>
<dbReference type="RefSeq" id="NP_984186.2">
    <property type="nucleotide sequence ID" value="NM_209539.2"/>
</dbReference>
<dbReference type="SMR" id="Q75A30"/>
<dbReference type="FunCoup" id="Q75A30">
    <property type="interactions" value="768"/>
</dbReference>
<dbReference type="STRING" id="284811.Q75A30"/>
<dbReference type="EnsemblFungi" id="AAS52010">
    <property type="protein sequence ID" value="AAS52010"/>
    <property type="gene ID" value="AGOS_ADR090W"/>
</dbReference>
<dbReference type="GeneID" id="4620335"/>
<dbReference type="KEGG" id="ago:AGOS_ADR090W"/>
<dbReference type="eggNOG" id="KOG0307">
    <property type="taxonomic scope" value="Eukaryota"/>
</dbReference>
<dbReference type="HOGENOM" id="CLU_003033_2_0_1"/>
<dbReference type="InParanoid" id="Q75A30"/>
<dbReference type="OMA" id="AQWAFGG"/>
<dbReference type="OrthoDB" id="542917at2759"/>
<dbReference type="Proteomes" id="UP000000591">
    <property type="component" value="Chromosome IV"/>
</dbReference>
<dbReference type="GO" id="GO:0030127">
    <property type="term" value="C:COPII vesicle coat"/>
    <property type="evidence" value="ECO:0000318"/>
    <property type="project" value="GO_Central"/>
</dbReference>
<dbReference type="GO" id="GO:0070971">
    <property type="term" value="C:endoplasmic reticulum exit site"/>
    <property type="evidence" value="ECO:0000318"/>
    <property type="project" value="GO_Central"/>
</dbReference>
<dbReference type="GO" id="GO:0005789">
    <property type="term" value="C:endoplasmic reticulum membrane"/>
    <property type="evidence" value="ECO:0007669"/>
    <property type="project" value="UniProtKB-SubCell"/>
</dbReference>
<dbReference type="GO" id="GO:0005198">
    <property type="term" value="F:structural molecule activity"/>
    <property type="evidence" value="ECO:0000318"/>
    <property type="project" value="GO_Central"/>
</dbReference>
<dbReference type="GO" id="GO:0090110">
    <property type="term" value="P:COPII-coated vesicle cargo loading"/>
    <property type="evidence" value="ECO:0000318"/>
    <property type="project" value="GO_Central"/>
</dbReference>
<dbReference type="GO" id="GO:0007029">
    <property type="term" value="P:endoplasmic reticulum organization"/>
    <property type="evidence" value="ECO:0000318"/>
    <property type="project" value="GO_Central"/>
</dbReference>
<dbReference type="GO" id="GO:1902953">
    <property type="term" value="P:positive regulation of ER to Golgi vesicle-mediated transport"/>
    <property type="evidence" value="ECO:0007669"/>
    <property type="project" value="EnsemblFungi"/>
</dbReference>
<dbReference type="GO" id="GO:0070863">
    <property type="term" value="P:positive regulation of protein exit from endoplasmic reticulum"/>
    <property type="evidence" value="ECO:0007669"/>
    <property type="project" value="EnsemblFungi"/>
</dbReference>
<dbReference type="GO" id="GO:0015031">
    <property type="term" value="P:protein transport"/>
    <property type="evidence" value="ECO:0007669"/>
    <property type="project" value="UniProtKB-KW"/>
</dbReference>
<dbReference type="Gene3D" id="1.25.40.980">
    <property type="match status" value="1"/>
</dbReference>
<dbReference type="Gene3D" id="2.20.25.400">
    <property type="match status" value="1"/>
</dbReference>
<dbReference type="Gene3D" id="6.10.140.1600">
    <property type="match status" value="1"/>
</dbReference>
<dbReference type="Gene3D" id="1.20.940.10">
    <property type="entry name" value="Functional domain of the splicing factor Prp18"/>
    <property type="match status" value="1"/>
</dbReference>
<dbReference type="Gene3D" id="2.130.10.10">
    <property type="entry name" value="YVTN repeat-like/Quinoprotein amine dehydrogenase"/>
    <property type="match status" value="1"/>
</dbReference>
<dbReference type="InterPro" id="IPR024298">
    <property type="entry name" value="Sec16_Sec23-bd"/>
</dbReference>
<dbReference type="InterPro" id="IPR021614">
    <property type="entry name" value="Sec31"/>
</dbReference>
<dbReference type="InterPro" id="IPR040251">
    <property type="entry name" value="SEC31-like"/>
</dbReference>
<dbReference type="InterPro" id="IPR009917">
    <property type="entry name" value="SRA1/Sec31"/>
</dbReference>
<dbReference type="InterPro" id="IPR015943">
    <property type="entry name" value="WD40/YVTN_repeat-like_dom_sf"/>
</dbReference>
<dbReference type="InterPro" id="IPR036322">
    <property type="entry name" value="WD40_repeat_dom_sf"/>
</dbReference>
<dbReference type="InterPro" id="IPR001680">
    <property type="entry name" value="WD40_rpt"/>
</dbReference>
<dbReference type="PANTHER" id="PTHR13923">
    <property type="entry name" value="SEC31-RELATED PROTEIN"/>
    <property type="match status" value="1"/>
</dbReference>
<dbReference type="PANTHER" id="PTHR13923:SF11">
    <property type="entry name" value="SECRETORY 31, ISOFORM D"/>
    <property type="match status" value="1"/>
</dbReference>
<dbReference type="Pfam" id="PF11549">
    <property type="entry name" value="Sec31"/>
    <property type="match status" value="1"/>
</dbReference>
<dbReference type="Pfam" id="PF07304">
    <property type="entry name" value="SRA1"/>
    <property type="match status" value="1"/>
</dbReference>
<dbReference type="Pfam" id="PF12931">
    <property type="entry name" value="TPR_Sec16"/>
    <property type="match status" value="1"/>
</dbReference>
<dbReference type="Pfam" id="PF00400">
    <property type="entry name" value="WD40"/>
    <property type="match status" value="1"/>
</dbReference>
<dbReference type="SMART" id="SM00320">
    <property type="entry name" value="WD40"/>
    <property type="match status" value="6"/>
</dbReference>
<dbReference type="SUPFAM" id="SSF50978">
    <property type="entry name" value="WD40 repeat-like"/>
    <property type="match status" value="1"/>
</dbReference>
<dbReference type="PROSITE" id="PS50082">
    <property type="entry name" value="WD_REPEATS_2"/>
    <property type="match status" value="2"/>
</dbReference>
<dbReference type="PROSITE" id="PS50294">
    <property type="entry name" value="WD_REPEATS_REGION"/>
    <property type="match status" value="1"/>
</dbReference>
<gene>
    <name type="primary">SEC31</name>
    <name type="ordered locus">ADR090W</name>
</gene>
<evidence type="ECO:0000250" key="1"/>
<evidence type="ECO:0000255" key="2">
    <source>
        <dbReference type="PROSITE-ProRule" id="PRU00221"/>
    </source>
</evidence>
<evidence type="ECO:0000256" key="3">
    <source>
        <dbReference type="SAM" id="MobiDB-lite"/>
    </source>
</evidence>
<evidence type="ECO:0000305" key="4"/>
<comment type="function">
    <text evidence="1">Component of the coat protein complex II (COPII) which promotes the formation of transport vesicles from the endoplasmic reticulum (ER). The coat has two main functions, the physical deformation of the endoplasmic reticulum membrane into vesicles and the selection of cargo molecules (By similarity).</text>
</comment>
<comment type="subunit">
    <text evidence="1">The COPII coat is composed of at least 5 proteins: the SEC23/24 complex, the SEC13/31 complex, and the protein SAR1. SEC13 and SEC31 make a 2:2 tetramer that forms the edge element of the COPII outer coat. The tetramer self-assembles in multiple copies to form the complete polyhedral cage. Interacts (via WD 8) with SEC13 (By similarity).</text>
</comment>
<comment type="subcellular location">
    <subcellularLocation>
        <location evidence="1">Cytoplasmic vesicle</location>
        <location evidence="1">COPII-coated vesicle membrane</location>
        <topology evidence="1">Peripheral membrane protein</topology>
        <orientation evidence="1">Cytoplasmic side</orientation>
    </subcellularLocation>
    <subcellularLocation>
        <location evidence="1">Endoplasmic reticulum membrane</location>
        <topology evidence="1">Peripheral membrane protein</topology>
        <orientation evidence="1">Cytoplasmic side</orientation>
    </subcellularLocation>
</comment>
<comment type="similarity">
    <text evidence="4">Belongs to the WD repeat SEC31 family.</text>
</comment>